<proteinExistence type="inferred from homology"/>
<evidence type="ECO:0000255" key="1">
    <source>
        <dbReference type="HAMAP-Rule" id="MF_01248"/>
    </source>
</evidence>
<gene>
    <name evidence="1" type="primary">glgX</name>
    <name type="ordered locus">KPK_0317</name>
</gene>
<dbReference type="EC" id="3.2.1.196" evidence="1"/>
<dbReference type="EMBL" id="CP000964">
    <property type="protein sequence ID" value="ACI08191.1"/>
    <property type="molecule type" value="Genomic_DNA"/>
</dbReference>
<dbReference type="SMR" id="B5XTQ8"/>
<dbReference type="CAZy" id="CBM48">
    <property type="family name" value="Carbohydrate-Binding Module Family 48"/>
</dbReference>
<dbReference type="CAZy" id="GH13">
    <property type="family name" value="Glycoside Hydrolase Family 13"/>
</dbReference>
<dbReference type="KEGG" id="kpe:KPK_0317"/>
<dbReference type="HOGENOM" id="CLU_011725_1_1_6"/>
<dbReference type="UniPathway" id="UPA00165"/>
<dbReference type="Proteomes" id="UP000001734">
    <property type="component" value="Chromosome"/>
</dbReference>
<dbReference type="GO" id="GO:0004133">
    <property type="term" value="F:glycogen debranching enzyme activity"/>
    <property type="evidence" value="ECO:0007669"/>
    <property type="project" value="UniProtKB-UniRule"/>
</dbReference>
<dbReference type="GO" id="GO:0004553">
    <property type="term" value="F:hydrolase activity, hydrolyzing O-glycosyl compounds"/>
    <property type="evidence" value="ECO:0007669"/>
    <property type="project" value="InterPro"/>
</dbReference>
<dbReference type="GO" id="GO:0005980">
    <property type="term" value="P:glycogen catabolic process"/>
    <property type="evidence" value="ECO:0007669"/>
    <property type="project" value="UniProtKB-UniRule"/>
</dbReference>
<dbReference type="CDD" id="cd11326">
    <property type="entry name" value="AmyAc_Glg_debranch"/>
    <property type="match status" value="1"/>
</dbReference>
<dbReference type="CDD" id="cd02856">
    <property type="entry name" value="E_set_GDE_Isoamylase_N"/>
    <property type="match status" value="1"/>
</dbReference>
<dbReference type="Gene3D" id="3.20.20.80">
    <property type="entry name" value="Glycosidases"/>
    <property type="match status" value="1"/>
</dbReference>
<dbReference type="Gene3D" id="2.60.40.1180">
    <property type="entry name" value="Golgi alpha-mannosidase II"/>
    <property type="match status" value="1"/>
</dbReference>
<dbReference type="Gene3D" id="2.60.40.10">
    <property type="entry name" value="Immunoglobulins"/>
    <property type="match status" value="1"/>
</dbReference>
<dbReference type="HAMAP" id="MF_01248">
    <property type="entry name" value="GlgX"/>
    <property type="match status" value="1"/>
</dbReference>
<dbReference type="InterPro" id="IPR040784">
    <property type="entry name" value="GlgX_C"/>
</dbReference>
<dbReference type="InterPro" id="IPR044505">
    <property type="entry name" value="GlgX_Isoamylase_N_E_set"/>
</dbReference>
<dbReference type="InterPro" id="IPR006047">
    <property type="entry name" value="Glyco_hydro_13_cat_dom"/>
</dbReference>
<dbReference type="InterPro" id="IPR004193">
    <property type="entry name" value="Glyco_hydro_13_N"/>
</dbReference>
<dbReference type="InterPro" id="IPR013780">
    <property type="entry name" value="Glyco_hydro_b"/>
</dbReference>
<dbReference type="InterPro" id="IPR022844">
    <property type="entry name" value="Glycogen_debranch_bac"/>
</dbReference>
<dbReference type="InterPro" id="IPR011837">
    <property type="entry name" value="Glycogen_debranch_GlgX"/>
</dbReference>
<dbReference type="InterPro" id="IPR017853">
    <property type="entry name" value="Glycoside_hydrolase_SF"/>
</dbReference>
<dbReference type="InterPro" id="IPR013783">
    <property type="entry name" value="Ig-like_fold"/>
</dbReference>
<dbReference type="InterPro" id="IPR014756">
    <property type="entry name" value="Ig_E-set"/>
</dbReference>
<dbReference type="NCBIfam" id="TIGR02100">
    <property type="entry name" value="glgX_debranch"/>
    <property type="match status" value="1"/>
</dbReference>
<dbReference type="NCBIfam" id="NF002983">
    <property type="entry name" value="PRK03705.1"/>
    <property type="match status" value="1"/>
</dbReference>
<dbReference type="PANTHER" id="PTHR43002">
    <property type="entry name" value="GLYCOGEN DEBRANCHING ENZYME"/>
    <property type="match status" value="1"/>
</dbReference>
<dbReference type="Pfam" id="PF00128">
    <property type="entry name" value="Alpha-amylase"/>
    <property type="match status" value="1"/>
</dbReference>
<dbReference type="Pfam" id="PF02922">
    <property type="entry name" value="CBM_48"/>
    <property type="match status" value="1"/>
</dbReference>
<dbReference type="Pfam" id="PF18390">
    <property type="entry name" value="GlgX_C"/>
    <property type="match status" value="1"/>
</dbReference>
<dbReference type="SMART" id="SM00642">
    <property type="entry name" value="Aamy"/>
    <property type="match status" value="1"/>
</dbReference>
<dbReference type="SUPFAM" id="SSF51445">
    <property type="entry name" value="(Trans)glycosidases"/>
    <property type="match status" value="1"/>
</dbReference>
<dbReference type="SUPFAM" id="SSF81296">
    <property type="entry name" value="E set domains"/>
    <property type="match status" value="1"/>
</dbReference>
<protein>
    <recommendedName>
        <fullName evidence="1">Glycogen debranching enzyme</fullName>
        <ecNumber evidence="1">3.2.1.196</ecNumber>
    </recommendedName>
    <alternativeName>
        <fullName evidence="1">Limit dextrin alpha-1,6-maltotetraose-hydrolase</fullName>
    </alternativeName>
</protein>
<comment type="function">
    <text evidence="1">Removes maltotriose and maltotetraose chains that are attached by 1,6-alpha-linkage to the limit dextrin main chain, generating a debranched limit dextrin.</text>
</comment>
<comment type="catalytic activity">
    <reaction evidence="1">
        <text>Hydrolysis of (1-&gt;6)-alpha-D-glucosidic linkages to branches with degrees of polymerization of three or four glucose residues in limit dextrin.</text>
        <dbReference type="EC" id="3.2.1.196"/>
    </reaction>
</comment>
<comment type="pathway">
    <text evidence="1">Glycan degradation; glycogen degradation.</text>
</comment>
<comment type="similarity">
    <text evidence="1">Belongs to the glycosyl hydrolase 13 family.</text>
</comment>
<accession>B5XTQ8</accession>
<keyword id="KW-0119">Carbohydrate metabolism</keyword>
<keyword id="KW-0321">Glycogen metabolism</keyword>
<keyword id="KW-0326">Glycosidase</keyword>
<keyword id="KW-0378">Hydrolase</keyword>
<feature type="chain" id="PRO_1000165061" description="Glycogen debranching enzyme">
    <location>
        <begin position="1"/>
        <end position="658"/>
    </location>
</feature>
<feature type="active site" description="Nucleophile" evidence="1">
    <location>
        <position position="336"/>
    </location>
</feature>
<feature type="active site" description="Proton donor" evidence="1">
    <location>
        <position position="371"/>
    </location>
</feature>
<feature type="site" description="Transition state stabilizer" evidence="1">
    <location>
        <position position="443"/>
    </location>
</feature>
<name>GLGX_KLEP3</name>
<reference key="1">
    <citation type="journal article" date="2008" name="PLoS Genet.">
        <title>Complete genome sequence of the N2-fixing broad host range endophyte Klebsiella pneumoniae 342 and virulence predictions verified in mice.</title>
        <authorList>
            <person name="Fouts D.E."/>
            <person name="Tyler H.L."/>
            <person name="DeBoy R.T."/>
            <person name="Daugherty S."/>
            <person name="Ren Q."/>
            <person name="Badger J.H."/>
            <person name="Durkin A.S."/>
            <person name="Huot H."/>
            <person name="Shrivastava S."/>
            <person name="Kothari S."/>
            <person name="Dodson R.J."/>
            <person name="Mohamoud Y."/>
            <person name="Khouri H."/>
            <person name="Roesch L.F.W."/>
            <person name="Krogfelt K.A."/>
            <person name="Struve C."/>
            <person name="Triplett E.W."/>
            <person name="Methe B.A."/>
        </authorList>
    </citation>
    <scope>NUCLEOTIDE SEQUENCE [LARGE SCALE GENOMIC DNA]</scope>
    <source>
        <strain>342</strain>
    </source>
</reference>
<sequence>MTSLAAGKPAPLGASYDGKGVNFALFSAHAERVELCVFDEQGNEQRVDLPARSGDIWHGWLDAAGPGLRYGYRVHGPWDPAQGHRFNPAKLLLDPCAYRVEGDLPDDERLHGGMWEPDHRDSAAIAPKSQVVDLHYDWRGDKPPRTPWGETVIYEAHVKGLTLLHPQLPEAIRGTYKALGHPVMIAYFKSLGISALELLPVAQFASEPRLQRMGLSNYWGYNPLAWFALDPRYASDPARALDEFRDAVKALHAAGIEVILDIVLNHSAEIDLEGPTVSLRGIDNRSYYWVREDGDYHNWTGCGNTLNLSHPGVVEWARQCLRFWVDECHVDGFRFDLASVMGRTPEFRQDAPLFEAIRRDSVLSQVKLIAEPWDIGPGGYQVANFPPLFAEWNDHFRDISRRFWLQQNVSLGDFAQRFAASSDLFARDGKRPSATVNLVTAHDGFTLRDCVCFNQKHNEANGEENRDGTNNNYSNNHGIEGLDANLAVIERRRASVHALLTTLLLAQGTPMLLAGDEQGHSQHGNNNAYCQDNALTWLDWRQANPGLTAFTAALIHLRRRIPALTRNRWWQEGDGNVRWLNRNAQPLTAGEWQLGAACMQIQLSDRWLLTLNATAEVVDMVLPEGEWRAVPPFAGEDNPVIMAVWHGPAHGVCVFQRS</sequence>
<organism>
    <name type="scientific">Klebsiella pneumoniae (strain 342)</name>
    <dbReference type="NCBI Taxonomy" id="507522"/>
    <lineage>
        <taxon>Bacteria</taxon>
        <taxon>Pseudomonadati</taxon>
        <taxon>Pseudomonadota</taxon>
        <taxon>Gammaproteobacteria</taxon>
        <taxon>Enterobacterales</taxon>
        <taxon>Enterobacteriaceae</taxon>
        <taxon>Klebsiella/Raoultella group</taxon>
        <taxon>Klebsiella</taxon>
        <taxon>Klebsiella pneumoniae complex</taxon>
    </lineage>
</organism>